<feature type="chain" id="PRO_0000129619" description="Large ribosomal subunit protein uL2">
    <location>
        <begin position="1"/>
        <end position="277"/>
    </location>
</feature>
<feature type="region of interest" description="Disordered" evidence="2">
    <location>
        <begin position="36"/>
        <end position="55"/>
    </location>
</feature>
<feature type="region of interest" description="Disordered" evidence="2">
    <location>
        <begin position="213"/>
        <end position="277"/>
    </location>
</feature>
<organism>
    <name type="scientific">Staphylococcus aureus (strain MW2)</name>
    <dbReference type="NCBI Taxonomy" id="196620"/>
    <lineage>
        <taxon>Bacteria</taxon>
        <taxon>Bacillati</taxon>
        <taxon>Bacillota</taxon>
        <taxon>Bacilli</taxon>
        <taxon>Bacillales</taxon>
        <taxon>Staphylococcaceae</taxon>
        <taxon>Staphylococcus</taxon>
    </lineage>
</organism>
<name>RL2_STAAW</name>
<dbReference type="EMBL" id="BA000033">
    <property type="protein sequence ID" value="BAB96031.1"/>
    <property type="molecule type" value="Genomic_DNA"/>
</dbReference>
<dbReference type="RefSeq" id="WP_000985472.1">
    <property type="nucleotide sequence ID" value="NC_003923.1"/>
</dbReference>
<dbReference type="PDB" id="8Y36">
    <property type="method" value="EM"/>
    <property type="resolution" value="2.65 A"/>
    <property type="chains" value="C=2-275"/>
</dbReference>
<dbReference type="PDB" id="8Y37">
    <property type="method" value="EM"/>
    <property type="resolution" value="2.53 A"/>
    <property type="chains" value="C=2-275"/>
</dbReference>
<dbReference type="PDB" id="8Y38">
    <property type="method" value="EM"/>
    <property type="resolution" value="2.58 A"/>
    <property type="chains" value="C=2-275"/>
</dbReference>
<dbReference type="PDB" id="8Y39">
    <property type="method" value="EM"/>
    <property type="resolution" value="3.60 A"/>
    <property type="chains" value="C=2-275"/>
</dbReference>
<dbReference type="PDBsum" id="8Y36"/>
<dbReference type="PDBsum" id="8Y37"/>
<dbReference type="PDBsum" id="8Y38"/>
<dbReference type="PDBsum" id="8Y39"/>
<dbReference type="EMDB" id="EMD-38873"/>
<dbReference type="EMDB" id="EMD-38874"/>
<dbReference type="EMDB" id="EMD-38875"/>
<dbReference type="EMDB" id="EMD-38876"/>
<dbReference type="SMR" id="P60433"/>
<dbReference type="GeneID" id="98346559"/>
<dbReference type="KEGG" id="sam:MW2166"/>
<dbReference type="HOGENOM" id="CLU_036235_2_1_9"/>
<dbReference type="GO" id="GO:0015934">
    <property type="term" value="C:large ribosomal subunit"/>
    <property type="evidence" value="ECO:0007669"/>
    <property type="project" value="InterPro"/>
</dbReference>
<dbReference type="GO" id="GO:0019843">
    <property type="term" value="F:rRNA binding"/>
    <property type="evidence" value="ECO:0007669"/>
    <property type="project" value="UniProtKB-UniRule"/>
</dbReference>
<dbReference type="GO" id="GO:0003735">
    <property type="term" value="F:structural constituent of ribosome"/>
    <property type="evidence" value="ECO:0007669"/>
    <property type="project" value="InterPro"/>
</dbReference>
<dbReference type="GO" id="GO:0016740">
    <property type="term" value="F:transferase activity"/>
    <property type="evidence" value="ECO:0007669"/>
    <property type="project" value="InterPro"/>
</dbReference>
<dbReference type="GO" id="GO:0002181">
    <property type="term" value="P:cytoplasmic translation"/>
    <property type="evidence" value="ECO:0007669"/>
    <property type="project" value="TreeGrafter"/>
</dbReference>
<dbReference type="FunFam" id="2.30.30.30:FF:000001">
    <property type="entry name" value="50S ribosomal protein L2"/>
    <property type="match status" value="1"/>
</dbReference>
<dbReference type="FunFam" id="2.40.50.140:FF:000003">
    <property type="entry name" value="50S ribosomal protein L2"/>
    <property type="match status" value="1"/>
</dbReference>
<dbReference type="FunFam" id="4.10.950.10:FF:000001">
    <property type="entry name" value="50S ribosomal protein L2"/>
    <property type="match status" value="1"/>
</dbReference>
<dbReference type="Gene3D" id="2.30.30.30">
    <property type="match status" value="1"/>
</dbReference>
<dbReference type="Gene3D" id="2.40.50.140">
    <property type="entry name" value="Nucleic acid-binding proteins"/>
    <property type="match status" value="1"/>
</dbReference>
<dbReference type="Gene3D" id="4.10.950.10">
    <property type="entry name" value="Ribosomal protein L2, domain 3"/>
    <property type="match status" value="1"/>
</dbReference>
<dbReference type="HAMAP" id="MF_01320_B">
    <property type="entry name" value="Ribosomal_uL2_B"/>
    <property type="match status" value="1"/>
</dbReference>
<dbReference type="InterPro" id="IPR012340">
    <property type="entry name" value="NA-bd_OB-fold"/>
</dbReference>
<dbReference type="InterPro" id="IPR014722">
    <property type="entry name" value="Rib_uL2_dom2"/>
</dbReference>
<dbReference type="InterPro" id="IPR002171">
    <property type="entry name" value="Ribosomal_uL2"/>
</dbReference>
<dbReference type="InterPro" id="IPR005880">
    <property type="entry name" value="Ribosomal_uL2_bac/org-type"/>
</dbReference>
<dbReference type="InterPro" id="IPR022669">
    <property type="entry name" value="Ribosomal_uL2_C"/>
</dbReference>
<dbReference type="InterPro" id="IPR022671">
    <property type="entry name" value="Ribosomal_uL2_CS"/>
</dbReference>
<dbReference type="InterPro" id="IPR014726">
    <property type="entry name" value="Ribosomal_uL2_dom3"/>
</dbReference>
<dbReference type="InterPro" id="IPR022666">
    <property type="entry name" value="Ribosomal_uL2_RNA-bd_dom"/>
</dbReference>
<dbReference type="InterPro" id="IPR008991">
    <property type="entry name" value="Translation_prot_SH3-like_sf"/>
</dbReference>
<dbReference type="NCBIfam" id="TIGR01171">
    <property type="entry name" value="rplB_bact"/>
    <property type="match status" value="1"/>
</dbReference>
<dbReference type="PANTHER" id="PTHR13691:SF5">
    <property type="entry name" value="LARGE RIBOSOMAL SUBUNIT PROTEIN UL2M"/>
    <property type="match status" value="1"/>
</dbReference>
<dbReference type="PANTHER" id="PTHR13691">
    <property type="entry name" value="RIBOSOMAL PROTEIN L2"/>
    <property type="match status" value="1"/>
</dbReference>
<dbReference type="Pfam" id="PF00181">
    <property type="entry name" value="Ribosomal_L2"/>
    <property type="match status" value="1"/>
</dbReference>
<dbReference type="Pfam" id="PF03947">
    <property type="entry name" value="Ribosomal_L2_C"/>
    <property type="match status" value="1"/>
</dbReference>
<dbReference type="PIRSF" id="PIRSF002158">
    <property type="entry name" value="Ribosomal_L2"/>
    <property type="match status" value="1"/>
</dbReference>
<dbReference type="SMART" id="SM01383">
    <property type="entry name" value="Ribosomal_L2"/>
    <property type="match status" value="1"/>
</dbReference>
<dbReference type="SMART" id="SM01382">
    <property type="entry name" value="Ribosomal_L2_C"/>
    <property type="match status" value="1"/>
</dbReference>
<dbReference type="SUPFAM" id="SSF50249">
    <property type="entry name" value="Nucleic acid-binding proteins"/>
    <property type="match status" value="1"/>
</dbReference>
<dbReference type="SUPFAM" id="SSF50104">
    <property type="entry name" value="Translation proteins SH3-like domain"/>
    <property type="match status" value="1"/>
</dbReference>
<dbReference type="PROSITE" id="PS00467">
    <property type="entry name" value="RIBOSOMAL_L2"/>
    <property type="match status" value="1"/>
</dbReference>
<comment type="function">
    <text evidence="1">One of the primary rRNA binding proteins. Required for association of the 30S and 50S subunits to form the 70S ribosome, for tRNA binding and peptide bond formation. It has been suggested to have peptidyltransferase activity; this is somewhat controversial. Makes several contacts with the 16S rRNA in the 70S ribosome.</text>
</comment>
<comment type="subunit">
    <text evidence="1">Part of the 50S ribosomal subunit. Forms a bridge to the 30S subunit in the 70S ribosome.</text>
</comment>
<comment type="similarity">
    <text evidence="1">Belongs to the universal ribosomal protein uL2 family.</text>
</comment>
<protein>
    <recommendedName>
        <fullName evidence="1">Large ribosomal subunit protein uL2</fullName>
    </recommendedName>
    <alternativeName>
        <fullName evidence="3">50S ribosomal protein L2</fullName>
    </alternativeName>
</protein>
<proteinExistence type="evidence at protein level"/>
<sequence length="277" mass="30155">MAIKKYKPITNGRRNMTSLDFAEITKTTPEKSLLKPLPKKAGRNNQGKLTVRHHGGGHKRQYRVIDFKRNKDGINAKVDSIQYDPNRSANIALVVYADGEKRYIIAPKGLEVGQIVESGAEADIKVGNALPLQNIPVGTVVHNIELKPGKGGQIARSAGASAQVLGKEGKYVLIRLRSGEVRMILSTCRATIGQVGNLQHELVNVGKAGRSRWKGIRPTVRGSVMNPNDHPHGGGEGRAPIGRPSPMSPWGKPTLGKKTRRGKKSSDKLIVRGRKKK</sequence>
<evidence type="ECO:0000255" key="1">
    <source>
        <dbReference type="HAMAP-Rule" id="MF_01320"/>
    </source>
</evidence>
<evidence type="ECO:0000256" key="2">
    <source>
        <dbReference type="SAM" id="MobiDB-lite"/>
    </source>
</evidence>
<evidence type="ECO:0000305" key="3"/>
<reference key="1">
    <citation type="journal article" date="2002" name="Lancet">
        <title>Genome and virulence determinants of high virulence community-acquired MRSA.</title>
        <authorList>
            <person name="Baba T."/>
            <person name="Takeuchi F."/>
            <person name="Kuroda M."/>
            <person name="Yuzawa H."/>
            <person name="Aoki K."/>
            <person name="Oguchi A."/>
            <person name="Nagai Y."/>
            <person name="Iwama N."/>
            <person name="Asano K."/>
            <person name="Naimi T."/>
            <person name="Kuroda H."/>
            <person name="Cui L."/>
            <person name="Yamamoto K."/>
            <person name="Hiramatsu K."/>
        </authorList>
    </citation>
    <scope>NUCLEOTIDE SEQUENCE [LARGE SCALE GENOMIC DNA]</scope>
    <source>
        <strain>MW2</strain>
    </source>
</reference>
<gene>
    <name evidence="1" type="primary">rplB</name>
    <name type="ordered locus">MW2166</name>
</gene>
<keyword id="KW-0002">3D-structure</keyword>
<keyword id="KW-0687">Ribonucleoprotein</keyword>
<keyword id="KW-0689">Ribosomal protein</keyword>
<keyword id="KW-0694">RNA-binding</keyword>
<keyword id="KW-0699">rRNA-binding</keyword>
<accession>P60433</accession>
<accession>Q99S24</accession>
<accession>Q9AJ03</accession>